<proteinExistence type="inferred from homology"/>
<keyword id="KW-0249">Electron transport</keyword>
<keyword id="KW-0349">Heme</keyword>
<keyword id="KW-0408">Iron</keyword>
<keyword id="KW-0472">Membrane</keyword>
<keyword id="KW-0479">Metal-binding</keyword>
<keyword id="KW-0496">Mitochondrion</keyword>
<keyword id="KW-0999">Mitochondrion inner membrane</keyword>
<keyword id="KW-0679">Respiratory chain</keyword>
<keyword id="KW-0812">Transmembrane</keyword>
<keyword id="KW-1133">Transmembrane helix</keyword>
<keyword id="KW-0813">Transport</keyword>
<keyword id="KW-0830">Ubiquinone</keyword>
<accession>Q94Y50</accession>
<accession>Q94Y49</accession>
<gene>
    <name type="primary">MT-CYB</name>
    <name type="synonym">COB</name>
    <name type="synonym">CYTB</name>
    <name type="synonym">MTCYB</name>
</gene>
<name>CYB_TAMRF</name>
<protein>
    <recommendedName>
        <fullName>Cytochrome b</fullName>
    </recommendedName>
    <alternativeName>
        <fullName>Complex III subunit 3</fullName>
    </alternativeName>
    <alternativeName>
        <fullName>Complex III subunit III</fullName>
    </alternativeName>
    <alternativeName>
        <fullName>Cytochrome b-c1 complex subunit 3</fullName>
    </alternativeName>
    <alternativeName>
        <fullName>Ubiquinol-cytochrome-c reductase complex cytochrome b subunit</fullName>
    </alternativeName>
</protein>
<sequence length="379" mass="43057">MTNIRKTHPLIKIINHSFIDLPAPSNISAWWNFGSLLGICLIIQILTGLFLAMHYTSDTMTAFSSVTHICRDVNYGWLIRYMHANGASMFFICLFLHVGRGLYYGSYTYFETWNIGVILLFAVMATAFMGYVLPWGQMSFWGATVITNLLSAIPYIGTTLVEWIWGGFSVDKATLTRFFAFHFILPFIITALVMVHLLFLHETGSNNPSGLISDSDKIPFHPYYTIKDILGILLLVLALMTLVLFSPDLLGDPDNYTPANPLNTPPHIKPEWYFLFAYAILRSIPNKLGGVLALVLSILILMLFPVLHMSKQRSMMFRPLSQCMFWILVADLFTLTWIGGQPVEYPFIIIGQLASILYFMIILLILPTISLFENKLLKW</sequence>
<comment type="function">
    <text evidence="2">Component of the ubiquinol-cytochrome c reductase complex (complex III or cytochrome b-c1 complex) that is part of the mitochondrial respiratory chain. The b-c1 complex mediates electron transfer from ubiquinol to cytochrome c. Contributes to the generation of a proton gradient across the mitochondrial membrane that is then used for ATP synthesis.</text>
</comment>
<comment type="cofactor">
    <cofactor evidence="2">
        <name>heme b</name>
        <dbReference type="ChEBI" id="CHEBI:60344"/>
    </cofactor>
    <text evidence="2">Binds 2 heme b groups non-covalently.</text>
</comment>
<comment type="subunit">
    <text evidence="2">The cytochrome bc1 complex contains 11 subunits: 3 respiratory subunits (MT-CYB, CYC1 and UQCRFS1), 2 core proteins (UQCRC1 and UQCRC2) and 6 low-molecular weight proteins (UQCRH/QCR6, UQCRB/QCR7, UQCRQ/QCR8, UQCR10/QCR9, UQCR11/QCR10 and a cleavage product of UQCRFS1). This cytochrome bc1 complex then forms a dimer.</text>
</comment>
<comment type="subcellular location">
    <subcellularLocation>
        <location evidence="2">Mitochondrion inner membrane</location>
        <topology evidence="2">Multi-pass membrane protein</topology>
    </subcellularLocation>
</comment>
<comment type="miscellaneous">
    <text evidence="1">Heme 1 (or BL or b562) is low-potential and absorbs at about 562 nm, and heme 2 (or BH or b566) is high-potential and absorbs at about 566 nm.</text>
</comment>
<comment type="similarity">
    <text evidence="3 4">Belongs to the cytochrome b family.</text>
</comment>
<comment type="caution">
    <text evidence="2">The full-length protein contains only eight transmembrane helices, not nine as predicted by bioinformatics tools.</text>
</comment>
<dbReference type="EMBL" id="AF147662">
    <property type="protein sequence ID" value="AAL14061.1"/>
    <property type="molecule type" value="Genomic_DNA"/>
</dbReference>
<dbReference type="EMBL" id="AF147663">
    <property type="protein sequence ID" value="AAL14062.1"/>
    <property type="molecule type" value="Genomic_DNA"/>
</dbReference>
<dbReference type="RefSeq" id="YP_009332048.1">
    <property type="nucleotide sequence ID" value="NC_032371.1"/>
</dbReference>
<dbReference type="SMR" id="Q94Y50"/>
<dbReference type="GeneID" id="30688839"/>
<dbReference type="CTD" id="4519"/>
<dbReference type="GO" id="GO:0005743">
    <property type="term" value="C:mitochondrial inner membrane"/>
    <property type="evidence" value="ECO:0007669"/>
    <property type="project" value="UniProtKB-SubCell"/>
</dbReference>
<dbReference type="GO" id="GO:0045275">
    <property type="term" value="C:respiratory chain complex III"/>
    <property type="evidence" value="ECO:0007669"/>
    <property type="project" value="InterPro"/>
</dbReference>
<dbReference type="GO" id="GO:0046872">
    <property type="term" value="F:metal ion binding"/>
    <property type="evidence" value="ECO:0007669"/>
    <property type="project" value="UniProtKB-KW"/>
</dbReference>
<dbReference type="GO" id="GO:0008121">
    <property type="term" value="F:ubiquinol-cytochrome-c reductase activity"/>
    <property type="evidence" value="ECO:0007669"/>
    <property type="project" value="InterPro"/>
</dbReference>
<dbReference type="GO" id="GO:0006122">
    <property type="term" value="P:mitochondrial electron transport, ubiquinol to cytochrome c"/>
    <property type="evidence" value="ECO:0007669"/>
    <property type="project" value="TreeGrafter"/>
</dbReference>
<dbReference type="CDD" id="cd00290">
    <property type="entry name" value="cytochrome_b_C"/>
    <property type="match status" value="1"/>
</dbReference>
<dbReference type="CDD" id="cd00284">
    <property type="entry name" value="Cytochrome_b_N"/>
    <property type="match status" value="1"/>
</dbReference>
<dbReference type="FunFam" id="1.20.810.10:FF:000002">
    <property type="entry name" value="Cytochrome b"/>
    <property type="match status" value="1"/>
</dbReference>
<dbReference type="Gene3D" id="1.20.810.10">
    <property type="entry name" value="Cytochrome Bc1 Complex, Chain C"/>
    <property type="match status" value="1"/>
</dbReference>
<dbReference type="InterPro" id="IPR005798">
    <property type="entry name" value="Cyt_b/b6_C"/>
</dbReference>
<dbReference type="InterPro" id="IPR036150">
    <property type="entry name" value="Cyt_b/b6_C_sf"/>
</dbReference>
<dbReference type="InterPro" id="IPR005797">
    <property type="entry name" value="Cyt_b/b6_N"/>
</dbReference>
<dbReference type="InterPro" id="IPR027387">
    <property type="entry name" value="Cytb/b6-like_sf"/>
</dbReference>
<dbReference type="InterPro" id="IPR030689">
    <property type="entry name" value="Cytochrome_b"/>
</dbReference>
<dbReference type="InterPro" id="IPR048260">
    <property type="entry name" value="Cytochrome_b_C_euk/bac"/>
</dbReference>
<dbReference type="InterPro" id="IPR048259">
    <property type="entry name" value="Cytochrome_b_N_euk/bac"/>
</dbReference>
<dbReference type="InterPro" id="IPR016174">
    <property type="entry name" value="Di-haem_cyt_TM"/>
</dbReference>
<dbReference type="PANTHER" id="PTHR19271">
    <property type="entry name" value="CYTOCHROME B"/>
    <property type="match status" value="1"/>
</dbReference>
<dbReference type="PANTHER" id="PTHR19271:SF16">
    <property type="entry name" value="CYTOCHROME B"/>
    <property type="match status" value="1"/>
</dbReference>
<dbReference type="Pfam" id="PF00032">
    <property type="entry name" value="Cytochrom_B_C"/>
    <property type="match status" value="1"/>
</dbReference>
<dbReference type="Pfam" id="PF00033">
    <property type="entry name" value="Cytochrome_B"/>
    <property type="match status" value="1"/>
</dbReference>
<dbReference type="PIRSF" id="PIRSF038885">
    <property type="entry name" value="COB"/>
    <property type="match status" value="1"/>
</dbReference>
<dbReference type="SUPFAM" id="SSF81648">
    <property type="entry name" value="a domain/subunit of cytochrome bc1 complex (Ubiquinol-cytochrome c reductase)"/>
    <property type="match status" value="1"/>
</dbReference>
<dbReference type="SUPFAM" id="SSF81342">
    <property type="entry name" value="Transmembrane di-heme cytochromes"/>
    <property type="match status" value="1"/>
</dbReference>
<dbReference type="PROSITE" id="PS51003">
    <property type="entry name" value="CYTB_CTER"/>
    <property type="match status" value="1"/>
</dbReference>
<dbReference type="PROSITE" id="PS51002">
    <property type="entry name" value="CYTB_NTER"/>
    <property type="match status" value="1"/>
</dbReference>
<evidence type="ECO:0000250" key="1"/>
<evidence type="ECO:0000250" key="2">
    <source>
        <dbReference type="UniProtKB" id="P00157"/>
    </source>
</evidence>
<evidence type="ECO:0000255" key="3">
    <source>
        <dbReference type="PROSITE-ProRule" id="PRU00967"/>
    </source>
</evidence>
<evidence type="ECO:0000255" key="4">
    <source>
        <dbReference type="PROSITE-ProRule" id="PRU00968"/>
    </source>
</evidence>
<organism>
    <name type="scientific">Tamias rufus</name>
    <name type="common">Hopi chipmunk</name>
    <name type="synonym">Neotamias rufus</name>
    <dbReference type="NCBI Taxonomy" id="123793"/>
    <lineage>
        <taxon>Eukaryota</taxon>
        <taxon>Metazoa</taxon>
        <taxon>Chordata</taxon>
        <taxon>Craniata</taxon>
        <taxon>Vertebrata</taxon>
        <taxon>Euteleostomi</taxon>
        <taxon>Mammalia</taxon>
        <taxon>Eutheria</taxon>
        <taxon>Euarchontoglires</taxon>
        <taxon>Glires</taxon>
        <taxon>Rodentia</taxon>
        <taxon>Sciuromorpha</taxon>
        <taxon>Sciuridae</taxon>
        <taxon>Xerinae</taxon>
        <taxon>Marmotini</taxon>
        <taxon>Tamias</taxon>
    </lineage>
</organism>
<geneLocation type="mitochondrion"/>
<feature type="chain" id="PRO_0000257950" description="Cytochrome b">
    <location>
        <begin position="1"/>
        <end position="379"/>
    </location>
</feature>
<feature type="transmembrane region" description="Helical" evidence="2">
    <location>
        <begin position="33"/>
        <end position="53"/>
    </location>
</feature>
<feature type="transmembrane region" description="Helical" evidence="2">
    <location>
        <begin position="77"/>
        <end position="98"/>
    </location>
</feature>
<feature type="transmembrane region" description="Helical" evidence="2">
    <location>
        <begin position="113"/>
        <end position="133"/>
    </location>
</feature>
<feature type="transmembrane region" description="Helical" evidence="2">
    <location>
        <begin position="178"/>
        <end position="198"/>
    </location>
</feature>
<feature type="transmembrane region" description="Helical" evidence="2">
    <location>
        <begin position="226"/>
        <end position="246"/>
    </location>
</feature>
<feature type="transmembrane region" description="Helical" evidence="2">
    <location>
        <begin position="288"/>
        <end position="308"/>
    </location>
</feature>
<feature type="transmembrane region" description="Helical" evidence="2">
    <location>
        <begin position="320"/>
        <end position="340"/>
    </location>
</feature>
<feature type="transmembrane region" description="Helical" evidence="2">
    <location>
        <begin position="347"/>
        <end position="367"/>
    </location>
</feature>
<feature type="binding site" description="axial binding residue" evidence="2">
    <location>
        <position position="83"/>
    </location>
    <ligand>
        <name>heme b</name>
        <dbReference type="ChEBI" id="CHEBI:60344"/>
        <label>b562</label>
    </ligand>
    <ligandPart>
        <name>Fe</name>
        <dbReference type="ChEBI" id="CHEBI:18248"/>
    </ligandPart>
</feature>
<feature type="binding site" description="axial binding residue" evidence="2">
    <location>
        <position position="97"/>
    </location>
    <ligand>
        <name>heme b</name>
        <dbReference type="ChEBI" id="CHEBI:60344"/>
        <label>b566</label>
    </ligand>
    <ligandPart>
        <name>Fe</name>
        <dbReference type="ChEBI" id="CHEBI:18248"/>
    </ligandPart>
</feature>
<feature type="binding site" description="axial binding residue" evidence="2">
    <location>
        <position position="182"/>
    </location>
    <ligand>
        <name>heme b</name>
        <dbReference type="ChEBI" id="CHEBI:60344"/>
        <label>b562</label>
    </ligand>
    <ligandPart>
        <name>Fe</name>
        <dbReference type="ChEBI" id="CHEBI:18248"/>
    </ligandPart>
</feature>
<feature type="binding site" description="axial binding residue" evidence="2">
    <location>
        <position position="196"/>
    </location>
    <ligand>
        <name>heme b</name>
        <dbReference type="ChEBI" id="CHEBI:60344"/>
        <label>b566</label>
    </ligand>
    <ligandPart>
        <name>Fe</name>
        <dbReference type="ChEBI" id="CHEBI:18248"/>
    </ligandPart>
</feature>
<feature type="binding site" evidence="2">
    <location>
        <position position="201"/>
    </location>
    <ligand>
        <name>a ubiquinone</name>
        <dbReference type="ChEBI" id="CHEBI:16389"/>
    </ligand>
</feature>
<feature type="sequence variant" description="In strain: Isolate MVZ 152779.">
    <original>A</original>
    <variation>V</variation>
    <location>
        <position position="238"/>
    </location>
</feature>
<feature type="sequence variant" description="In strain: Isolate MVZ 152779.">
    <original>T</original>
    <variation>I</variation>
    <location>
        <position position="241"/>
    </location>
</feature>
<feature type="sequence variant" description="In strain: Isolate MVZ 152779.">
    <original>V</original>
    <variation>I</variation>
    <location>
        <position position="306"/>
    </location>
</feature>
<reference key="1">
    <citation type="journal article" date="2001" name="Mol. Phylogenet. Evol.">
        <title>Molecular phylogeny of the chipmunks inferred from mitochondrial cytochrome b and cytochrome oxidase II gene sequences.</title>
        <authorList>
            <person name="Piaggio A.J."/>
            <person name="Spicer G.S."/>
        </authorList>
    </citation>
    <scope>NUCLEOTIDE SEQUENCE [GENOMIC DNA]</scope>
    <source>
        <strain>Isolate MSB 76532/NK 56249</strain>
        <strain>Isolate MVZ 152779</strain>
    </source>
</reference>